<accession>C1KW86</accession>
<feature type="chain" id="PRO_1000205895" description="Large ribosomal subunit protein bL19">
    <location>
        <begin position="1"/>
        <end position="114"/>
    </location>
</feature>
<organism>
    <name type="scientific">Listeria monocytogenes serotype 4b (strain CLIP80459)</name>
    <dbReference type="NCBI Taxonomy" id="568819"/>
    <lineage>
        <taxon>Bacteria</taxon>
        <taxon>Bacillati</taxon>
        <taxon>Bacillota</taxon>
        <taxon>Bacilli</taxon>
        <taxon>Bacillales</taxon>
        <taxon>Listeriaceae</taxon>
        <taxon>Listeria</taxon>
    </lineage>
</organism>
<keyword id="KW-0687">Ribonucleoprotein</keyword>
<keyword id="KW-0689">Ribosomal protein</keyword>
<comment type="function">
    <text evidence="1">This protein is located at the 30S-50S ribosomal subunit interface and may play a role in the structure and function of the aminoacyl-tRNA binding site.</text>
</comment>
<comment type="similarity">
    <text evidence="1">Belongs to the bacterial ribosomal protein bL19 family.</text>
</comment>
<dbReference type="EMBL" id="FM242711">
    <property type="protein sequence ID" value="CAS05561.1"/>
    <property type="molecule type" value="Genomic_DNA"/>
</dbReference>
<dbReference type="RefSeq" id="WP_003728425.1">
    <property type="nucleotide sequence ID" value="NC_012488.1"/>
</dbReference>
<dbReference type="SMR" id="C1KW86"/>
<dbReference type="GeneID" id="93239697"/>
<dbReference type="KEGG" id="lmc:Lm4b_01803"/>
<dbReference type="HOGENOM" id="CLU_103507_2_1_9"/>
<dbReference type="GO" id="GO:0022625">
    <property type="term" value="C:cytosolic large ribosomal subunit"/>
    <property type="evidence" value="ECO:0007669"/>
    <property type="project" value="TreeGrafter"/>
</dbReference>
<dbReference type="GO" id="GO:0003735">
    <property type="term" value="F:structural constituent of ribosome"/>
    <property type="evidence" value="ECO:0007669"/>
    <property type="project" value="InterPro"/>
</dbReference>
<dbReference type="GO" id="GO:0006412">
    <property type="term" value="P:translation"/>
    <property type="evidence" value="ECO:0007669"/>
    <property type="project" value="UniProtKB-UniRule"/>
</dbReference>
<dbReference type="FunFam" id="2.30.30.790:FF:000001">
    <property type="entry name" value="50S ribosomal protein L19"/>
    <property type="match status" value="1"/>
</dbReference>
<dbReference type="Gene3D" id="2.30.30.790">
    <property type="match status" value="1"/>
</dbReference>
<dbReference type="HAMAP" id="MF_00402">
    <property type="entry name" value="Ribosomal_bL19"/>
    <property type="match status" value="1"/>
</dbReference>
<dbReference type="InterPro" id="IPR001857">
    <property type="entry name" value="Ribosomal_bL19"/>
</dbReference>
<dbReference type="InterPro" id="IPR018257">
    <property type="entry name" value="Ribosomal_bL19_CS"/>
</dbReference>
<dbReference type="InterPro" id="IPR038657">
    <property type="entry name" value="Ribosomal_bL19_sf"/>
</dbReference>
<dbReference type="InterPro" id="IPR008991">
    <property type="entry name" value="Translation_prot_SH3-like_sf"/>
</dbReference>
<dbReference type="NCBIfam" id="TIGR01024">
    <property type="entry name" value="rplS_bact"/>
    <property type="match status" value="1"/>
</dbReference>
<dbReference type="PANTHER" id="PTHR15680:SF9">
    <property type="entry name" value="LARGE RIBOSOMAL SUBUNIT PROTEIN BL19M"/>
    <property type="match status" value="1"/>
</dbReference>
<dbReference type="PANTHER" id="PTHR15680">
    <property type="entry name" value="RIBOSOMAL PROTEIN L19"/>
    <property type="match status" value="1"/>
</dbReference>
<dbReference type="Pfam" id="PF01245">
    <property type="entry name" value="Ribosomal_L19"/>
    <property type="match status" value="1"/>
</dbReference>
<dbReference type="PIRSF" id="PIRSF002191">
    <property type="entry name" value="Ribosomal_L19"/>
    <property type="match status" value="1"/>
</dbReference>
<dbReference type="PRINTS" id="PR00061">
    <property type="entry name" value="RIBOSOMALL19"/>
</dbReference>
<dbReference type="SUPFAM" id="SSF50104">
    <property type="entry name" value="Translation proteins SH3-like domain"/>
    <property type="match status" value="1"/>
</dbReference>
<dbReference type="PROSITE" id="PS01015">
    <property type="entry name" value="RIBOSOMAL_L19"/>
    <property type="match status" value="1"/>
</dbReference>
<protein>
    <recommendedName>
        <fullName evidence="1">Large ribosomal subunit protein bL19</fullName>
    </recommendedName>
    <alternativeName>
        <fullName evidence="2">50S ribosomal protein L19</fullName>
    </alternativeName>
</protein>
<reference key="1">
    <citation type="journal article" date="2012" name="BMC Genomics">
        <title>Comparative genomics and transcriptomics of lineages I, II, and III strains of Listeria monocytogenes.</title>
        <authorList>
            <person name="Hain T."/>
            <person name="Ghai R."/>
            <person name="Billion A."/>
            <person name="Kuenne C.T."/>
            <person name="Steinweg C."/>
            <person name="Izar B."/>
            <person name="Mohamed W."/>
            <person name="Mraheil M."/>
            <person name="Domann E."/>
            <person name="Schaffrath S."/>
            <person name="Karst U."/>
            <person name="Goesmann A."/>
            <person name="Oehm S."/>
            <person name="Puhler A."/>
            <person name="Merkl R."/>
            <person name="Vorwerk S."/>
            <person name="Glaser P."/>
            <person name="Garrido P."/>
            <person name="Rusniok C."/>
            <person name="Buchrieser C."/>
            <person name="Goebel W."/>
            <person name="Chakraborty T."/>
        </authorList>
    </citation>
    <scope>NUCLEOTIDE SEQUENCE [LARGE SCALE GENOMIC DNA]</scope>
    <source>
        <strain>CLIP80459</strain>
    </source>
</reference>
<sequence length="114" mass="13117">MNKLIDEITKSQLNPDVPNFRPGDTVRVHAKVVEGTRERIQLFEGVVIKRRGAGISETFTVRKISNSVGVERTFPVHTPRIAKLEVIRRGKVRRAKLYYLRNLRGKAARIKEIR</sequence>
<name>RL19_LISMC</name>
<evidence type="ECO:0000255" key="1">
    <source>
        <dbReference type="HAMAP-Rule" id="MF_00402"/>
    </source>
</evidence>
<evidence type="ECO:0000305" key="2"/>
<proteinExistence type="inferred from homology"/>
<gene>
    <name evidence="1" type="primary">rplS</name>
    <name type="ordered locus">Lm4b_01803</name>
</gene>